<evidence type="ECO:0000255" key="1">
    <source>
        <dbReference type="HAMAP-Rule" id="MF_04014"/>
    </source>
</evidence>
<dbReference type="EMBL" id="X04370">
    <property type="protein sequence ID" value="CAA27913.1"/>
    <property type="molecule type" value="Genomic_DNA"/>
</dbReference>
<dbReference type="PIR" id="D27214">
    <property type="entry name" value="WZBE30"/>
</dbReference>
<dbReference type="SMR" id="P09284"/>
<dbReference type="Proteomes" id="UP000002602">
    <property type="component" value="Genome"/>
</dbReference>
<dbReference type="GO" id="GO:0042025">
    <property type="term" value="C:host cell nucleus"/>
    <property type="evidence" value="ECO:0007669"/>
    <property type="project" value="UniProtKB-SubCell"/>
</dbReference>
<dbReference type="GO" id="GO:0005524">
    <property type="term" value="F:ATP binding"/>
    <property type="evidence" value="ECO:0007669"/>
    <property type="project" value="UniProtKB-KW"/>
</dbReference>
<dbReference type="GO" id="GO:0008270">
    <property type="term" value="F:zinc ion binding"/>
    <property type="evidence" value="ECO:0007669"/>
    <property type="project" value="UniProtKB-KW"/>
</dbReference>
<dbReference type="GO" id="GO:0019073">
    <property type="term" value="P:viral DNA genome packaging"/>
    <property type="evidence" value="ECO:0007669"/>
    <property type="project" value="InterPro"/>
</dbReference>
<dbReference type="HAMAP" id="MF_04014">
    <property type="entry name" value="HSV_TRM1"/>
    <property type="match status" value="1"/>
</dbReference>
<dbReference type="InterPro" id="IPR000501">
    <property type="entry name" value="UL28/UL56"/>
</dbReference>
<dbReference type="Pfam" id="PF01366">
    <property type="entry name" value="PRTP"/>
    <property type="match status" value="1"/>
</dbReference>
<sequence>MELDINRTLLVLLGQVYTYIFQVELLRRCDPRVACRFLYRLAANCLTVRYLLKLFLRGFNTQLKFGNTPTVCALHWALCYVKGEGERLFELLQHFKTRFVYGETKDSNCIKDYFVSAFNLKTCQYHHELSLTTYGGYVSSEIQFLHDIENFLKQLNYCYIITSSREALNTLETVTRFMTDTIGSGLIPPVELFDPAHPCAICFEELCITANQGETLHRRLLGCICDHVTKQVRVNVDVDDIIRCLPYIPDVPDIKRQSAVEALRTLQTKTVVNPMGAKNDTFDQTYEIASTMLDSYNVFKPAPRCMYAISELKFWLTSNSTEGPQRTLDVFVDNLDVLNEHEKHAELTAVTVELALFGKTPIHFDRAFSEELGSLDAIDSILVGNRSSSPDSQIEALIKACYAHHLSSPLMRHISNPSHDNEAALRQLLERVGCEDDLTKEASDSATASECDLNDDSSITFAVHGWENLLSKAKIDAAERKRVYLEHLSKRSLTSLGRCIREQRQELEKTLRVNVYGEALLQTFVSMQNGFGARNVFLAKVSQAGCIIDNRIQEAAFDAHRFIRNTLVRHTVDAAMLPALTHKFFELVNGPLFNHDEHRFAQPPNTALFFTVENVGLFPHLKEELAKFMGGVVGSNWLLSPFRGFYCFSGVEGVTFAQRLAWKYIRELVFATTLFTSVFHCGEVRLCRVDRLGKDPRGCTSQPKGIGSSHGPLDGIYLTYEETCPLVAIIQSGETGIDQNTVVIYDSDVFSLLYTLMQRLAPDSTDPAFS</sequence>
<organism>
    <name type="scientific">Varicella-zoster virus (strain Dumas)</name>
    <name type="common">HHV-3</name>
    <name type="synonym">Human herpesvirus 3</name>
    <dbReference type="NCBI Taxonomy" id="10338"/>
    <lineage>
        <taxon>Viruses</taxon>
        <taxon>Duplodnaviria</taxon>
        <taxon>Heunggongvirae</taxon>
        <taxon>Peploviricota</taxon>
        <taxon>Herviviricetes</taxon>
        <taxon>Herpesvirales</taxon>
        <taxon>Orthoherpesviridae</taxon>
        <taxon>Alphaherpesvirinae</taxon>
        <taxon>Varicellovirus</taxon>
        <taxon>Varicellovirus humanalpha3</taxon>
        <taxon>Human herpesvirus 3</taxon>
    </lineage>
</organism>
<keyword id="KW-0067">ATP-binding</keyword>
<keyword id="KW-1048">Host nucleus</keyword>
<keyword id="KW-0426">Late protein</keyword>
<keyword id="KW-0479">Metal-binding</keyword>
<keyword id="KW-0547">Nucleotide-binding</keyword>
<keyword id="KW-1185">Reference proteome</keyword>
<keyword id="KW-0231">Viral genome packaging</keyword>
<keyword id="KW-1188">Viral release from host cell</keyword>
<keyword id="KW-0862">Zinc</keyword>
<keyword id="KW-0863">Zinc-finger</keyword>
<reference key="1">
    <citation type="journal article" date="1986" name="J. Gen. Virol.">
        <title>The complete DNA sequence of varicella-zoster virus.</title>
        <authorList>
            <person name="Davison A.J."/>
            <person name="Scott J.E."/>
        </authorList>
    </citation>
    <scope>NUCLEOTIDE SEQUENCE [LARGE SCALE GENOMIC DNA]</scope>
</reference>
<accession>P09284</accession>
<comment type="function">
    <text evidence="1">Component of the molecular motor that translocates viral genomic DNA in empty capsid during DNA packaging. Forms a tripartite terminase complex together with TRM2 and TRM3 in the host cytoplasm. Once the complex reaches the host nucleus, it interacts with the capsid portal vertex. This portal forms a ring in which genomic DNA is translocated into the capsid. TRM1 carries an endonuclease activity that plays an important role for the cleavage of concatemeric viral DNA into unit length genomes.</text>
</comment>
<comment type="subunit">
    <text evidence="1">Associates with TRM2 and TRM3 to form the tripartite terminase complex. Interacts with portal protein.</text>
</comment>
<comment type="subcellular location">
    <subcellularLocation>
        <location evidence="1">Host nucleus</location>
    </subcellularLocation>
    <text evidence="1">Found associated with the external surface of the viral capsid during assembly and DNA packaging, but seems absent in extracellular mature virions.</text>
</comment>
<comment type="similarity">
    <text evidence="1">Belongs to the herpesviridae TRM1 protein family.</text>
</comment>
<name>TRM1_VZVD</name>
<protein>
    <recommendedName>
        <fullName evidence="1">Tripartite terminase subunit 1</fullName>
    </recommendedName>
</protein>
<organismHost>
    <name type="scientific">Homo sapiens</name>
    <name type="common">Human</name>
    <dbReference type="NCBI Taxonomy" id="9606"/>
</organismHost>
<proteinExistence type="inferred from homology"/>
<gene>
    <name evidence="1" type="primary">TRM1</name>
    <name type="ordered locus">30</name>
</gene>
<feature type="chain" id="PRO_0000115887" description="Tripartite terminase subunit 1">
    <location>
        <begin position="1"/>
        <end position="770"/>
    </location>
</feature>
<feature type="zinc finger region" description="C3H1-type" evidence="1">
    <location>
        <begin position="199"/>
        <end position="227"/>
    </location>
</feature>
<feature type="binding site" evidence="1">
    <location>
        <begin position="675"/>
        <end position="682"/>
    </location>
    <ligand>
        <name>ATP</name>
        <dbReference type="ChEBI" id="CHEBI:30616"/>
    </ligand>
</feature>